<feature type="chain" id="PRO_1000070438" description="Cysteine desulfuration protein SufE">
    <location>
        <begin position="1"/>
        <end position="138"/>
    </location>
</feature>
<feature type="active site" description="Cysteine persulfide intermediate" evidence="1">
    <location>
        <position position="51"/>
    </location>
</feature>
<evidence type="ECO:0000255" key="1">
    <source>
        <dbReference type="HAMAP-Rule" id="MF_01832"/>
    </source>
</evidence>
<proteinExistence type="inferred from homology"/>
<sequence>MALLPDKEKLLRNFLRCANWEEKYLYIIELGQRLPELRDEDKSPQNSIQGCQSQVWIVMRQNAQGIIELHGDSDAAIVKGLIAVVFILYDQMTPQDIVNFDVRPWFEKMALTQHLTPSRSQGLEAMIRAIRAKAAALS</sequence>
<protein>
    <recommendedName>
        <fullName evidence="1">Cysteine desulfuration protein SufE</fullName>
    </recommendedName>
</protein>
<gene>
    <name evidence="1" type="primary">sufE</name>
    <name type="ordered locus">Ecok1_15630</name>
    <name type="ORF">APECO1_756</name>
</gene>
<comment type="function">
    <text evidence="1">Participates in cysteine desulfuration mediated by SufS. Cysteine desulfuration mobilizes sulfur from L-cysteine to yield L-alanine and constitutes an essential step in sulfur metabolism for biosynthesis of a variety of sulfur-containing biomolecules. Functions as a sulfur acceptor for SufS, by mediating the direct transfer of the sulfur atom from the S-sulfanylcysteine of SufS, an intermediate product of cysteine desulfuration process.</text>
</comment>
<comment type="pathway">
    <text evidence="1">Cofactor biosynthesis; iron-sulfur cluster biosynthesis.</text>
</comment>
<comment type="subunit">
    <text evidence="1">Homodimer. Interacts with SufS.</text>
</comment>
<comment type="subcellular location">
    <subcellularLocation>
        <location evidence="1">Cytoplasm</location>
    </subcellularLocation>
</comment>
<comment type="similarity">
    <text evidence="1">Belongs to the SufE family.</text>
</comment>
<organism>
    <name type="scientific">Escherichia coli O1:K1 / APEC</name>
    <dbReference type="NCBI Taxonomy" id="405955"/>
    <lineage>
        <taxon>Bacteria</taxon>
        <taxon>Pseudomonadati</taxon>
        <taxon>Pseudomonadota</taxon>
        <taxon>Gammaproteobacteria</taxon>
        <taxon>Enterobacterales</taxon>
        <taxon>Enterobacteriaceae</taxon>
        <taxon>Escherichia</taxon>
    </lineage>
</organism>
<name>SUFE_ECOK1</name>
<reference key="1">
    <citation type="journal article" date="2007" name="J. Bacteriol.">
        <title>The genome sequence of avian pathogenic Escherichia coli strain O1:K1:H7 shares strong similarities with human extraintestinal pathogenic E. coli genomes.</title>
        <authorList>
            <person name="Johnson T.J."/>
            <person name="Kariyawasam S."/>
            <person name="Wannemuehler Y."/>
            <person name="Mangiamele P."/>
            <person name="Johnson S.J."/>
            <person name="Doetkott C."/>
            <person name="Skyberg J.A."/>
            <person name="Lynne A.M."/>
            <person name="Johnson J.R."/>
            <person name="Nolan L.K."/>
        </authorList>
    </citation>
    <scope>NUCLEOTIDE SEQUENCE [LARGE SCALE GENOMIC DNA]</scope>
</reference>
<keyword id="KW-0963">Cytoplasm</keyword>
<keyword id="KW-1185">Reference proteome</keyword>
<accession>A1ABL7</accession>
<dbReference type="EMBL" id="CP000468">
    <property type="protein sequence ID" value="ABJ01057.1"/>
    <property type="molecule type" value="Genomic_DNA"/>
</dbReference>
<dbReference type="RefSeq" id="WP_001196521.1">
    <property type="nucleotide sequence ID" value="NZ_CADILS010000002.1"/>
</dbReference>
<dbReference type="SMR" id="A1ABL7"/>
<dbReference type="KEGG" id="ecv:APECO1_756"/>
<dbReference type="HOGENOM" id="CLU_124502_1_1_6"/>
<dbReference type="UniPathway" id="UPA00266"/>
<dbReference type="Proteomes" id="UP000008216">
    <property type="component" value="Chromosome"/>
</dbReference>
<dbReference type="GO" id="GO:0005737">
    <property type="term" value="C:cytoplasm"/>
    <property type="evidence" value="ECO:0007669"/>
    <property type="project" value="UniProtKB-SubCell"/>
</dbReference>
<dbReference type="GO" id="GO:0016226">
    <property type="term" value="P:iron-sulfur cluster assembly"/>
    <property type="evidence" value="ECO:0007669"/>
    <property type="project" value="InterPro"/>
</dbReference>
<dbReference type="GO" id="GO:0006790">
    <property type="term" value="P:sulfur compound metabolic process"/>
    <property type="evidence" value="ECO:0007669"/>
    <property type="project" value="InterPro"/>
</dbReference>
<dbReference type="FunFam" id="3.90.1010.10:FF:000004">
    <property type="entry name" value="Cysteine desulfuration protein SufE"/>
    <property type="match status" value="1"/>
</dbReference>
<dbReference type="Gene3D" id="3.90.1010.10">
    <property type="match status" value="1"/>
</dbReference>
<dbReference type="HAMAP" id="MF_01832">
    <property type="entry name" value="SufE"/>
    <property type="match status" value="1"/>
</dbReference>
<dbReference type="InterPro" id="IPR023939">
    <property type="entry name" value="Cysteine_desulfuration_SufE"/>
</dbReference>
<dbReference type="InterPro" id="IPR003808">
    <property type="entry name" value="Fe-S_metab-assoc_dom"/>
</dbReference>
<dbReference type="NCBIfam" id="NF006792">
    <property type="entry name" value="PRK09296.1"/>
    <property type="match status" value="1"/>
</dbReference>
<dbReference type="PANTHER" id="PTHR43597:SF3">
    <property type="entry name" value="CYSTEINE DESULFURATION PROTEIN SUFE"/>
    <property type="match status" value="1"/>
</dbReference>
<dbReference type="PANTHER" id="PTHR43597">
    <property type="entry name" value="SULFUR ACCEPTOR PROTEIN CSDE"/>
    <property type="match status" value="1"/>
</dbReference>
<dbReference type="Pfam" id="PF02657">
    <property type="entry name" value="SufE"/>
    <property type="match status" value="1"/>
</dbReference>
<dbReference type="SUPFAM" id="SSF82649">
    <property type="entry name" value="SufE/NifU"/>
    <property type="match status" value="1"/>
</dbReference>